<organism>
    <name type="scientific">Salmonella choleraesuis (strain SC-B67)</name>
    <dbReference type="NCBI Taxonomy" id="321314"/>
    <lineage>
        <taxon>Bacteria</taxon>
        <taxon>Pseudomonadati</taxon>
        <taxon>Pseudomonadota</taxon>
        <taxon>Gammaproteobacteria</taxon>
        <taxon>Enterobacterales</taxon>
        <taxon>Enterobacteriaceae</taxon>
        <taxon>Salmonella</taxon>
    </lineage>
</organism>
<gene>
    <name evidence="1" type="primary">gsiA</name>
    <name type="ordered locus">SCH_0843</name>
</gene>
<sequence>MPHSDELDSRDVLSVSGLNIAFHHEGQQVDAVRNVSLRLKRGETLAIVGESGSGKSVTALALMRLIEQSGANVRCGEMLLRRRNRQVIELSEQSDAQMRRVRGADIAMIFQEPMTSLNPVFTVGEQIAESIRLHQRASHEEALAEAKRMLDQVRIPESQAILSRYPHQLSGGMRQRVMIAMALSCRPAVLIADEPTTALDVTIQAQILQLIKVLQQEMSMGVIFITHDMGVVADIADRVLVMYQGEAVETGSVEQIFHAPTHPYTQTLLAAVPQLGAMRGHSLPRRFPLISADEPALYESQIEQDTVVEGEPILQVRGLVTRFPLRSGLFNRVTREVHAVENISFDLWPGETLSLVGESGSGKSTTGRALLRLVESRQGEIIFNGQRIDTLSAGKLQPLRRDIQCIFQDPYASLDPRQTVGYSIMEPLRIHGLGQGDAAAKRVAWLLERVGLRPEHAWRYPHEFSGGQRQRICIARALALNPKVIIADEAVSALDVSVRGQIINLLLDLQREMGIAYLFISHDMAVVERISHRVAVMYLGQIVEMGPRRAVFENPQHPYTRKLMAAVPVADPSRHRPRRVLLSDDIPSNIHKRGEETPAVSLQLVGPGHYVARPLQDNALSRL</sequence>
<comment type="function">
    <text evidence="1">Part of the ABC transporter complex GsiABCD involved in glutathione import. Responsible for energy coupling to the transport system.</text>
</comment>
<comment type="catalytic activity">
    <reaction evidence="1">
        <text>glutathione(out) + ATP + H2O = glutathione(in) + ADP + phosphate + H(+)</text>
        <dbReference type="Rhea" id="RHEA:29791"/>
        <dbReference type="ChEBI" id="CHEBI:15377"/>
        <dbReference type="ChEBI" id="CHEBI:15378"/>
        <dbReference type="ChEBI" id="CHEBI:30616"/>
        <dbReference type="ChEBI" id="CHEBI:43474"/>
        <dbReference type="ChEBI" id="CHEBI:57925"/>
        <dbReference type="ChEBI" id="CHEBI:456216"/>
        <dbReference type="EC" id="7.4.2.10"/>
    </reaction>
</comment>
<comment type="subunit">
    <text evidence="1">The complex is composed of two ATP-binding proteins (GsiA), two transmembrane proteins (GsiC and GsiD) and a solute-binding protein (GsiB).</text>
</comment>
<comment type="subcellular location">
    <subcellularLocation>
        <location evidence="1">Cell inner membrane</location>
        <topology evidence="1">Peripheral membrane protein</topology>
    </subcellularLocation>
</comment>
<comment type="similarity">
    <text evidence="3">Belongs to the ABC transporter superfamily. Glutathione importer (TC 3.A.1.5.11) family.</text>
</comment>
<comment type="sequence caution" evidence="3">
    <conflict type="erroneous initiation">
        <sequence resource="EMBL-CDS" id="AAX64749"/>
    </conflict>
</comment>
<protein>
    <recommendedName>
        <fullName evidence="1">Glutathione import ATP-binding protein GsiA</fullName>
        <ecNumber evidence="1">7.4.2.10</ecNumber>
    </recommendedName>
</protein>
<reference key="1">
    <citation type="journal article" date="2005" name="Nucleic Acids Res.">
        <title>The genome sequence of Salmonella enterica serovar Choleraesuis, a highly invasive and resistant zoonotic pathogen.</title>
        <authorList>
            <person name="Chiu C.-H."/>
            <person name="Tang P."/>
            <person name="Chu C."/>
            <person name="Hu S."/>
            <person name="Bao Q."/>
            <person name="Yu J."/>
            <person name="Chou Y.-Y."/>
            <person name="Wang H.-S."/>
            <person name="Lee Y.-S."/>
        </authorList>
    </citation>
    <scope>NUCLEOTIDE SEQUENCE [LARGE SCALE GENOMIC DNA]</scope>
    <source>
        <strain>SC-B67</strain>
    </source>
</reference>
<evidence type="ECO:0000250" key="1">
    <source>
        <dbReference type="UniProtKB" id="P75796"/>
    </source>
</evidence>
<evidence type="ECO:0000255" key="2">
    <source>
        <dbReference type="PROSITE-ProRule" id="PRU00434"/>
    </source>
</evidence>
<evidence type="ECO:0000305" key="3"/>
<feature type="chain" id="PRO_0000280023" description="Glutathione import ATP-binding protein GsiA">
    <location>
        <begin position="1"/>
        <end position="623"/>
    </location>
</feature>
<feature type="domain" description="ABC transporter 1" evidence="2">
    <location>
        <begin position="15"/>
        <end position="269"/>
    </location>
</feature>
<feature type="domain" description="ABC transporter 2" evidence="2">
    <location>
        <begin position="325"/>
        <end position="564"/>
    </location>
</feature>
<feature type="binding site" evidence="2">
    <location>
        <begin position="49"/>
        <end position="56"/>
    </location>
    <ligand>
        <name>ATP</name>
        <dbReference type="ChEBI" id="CHEBI:30616"/>
    </ligand>
</feature>
<feature type="binding site" evidence="2">
    <location>
        <begin position="357"/>
        <end position="364"/>
    </location>
    <ligand>
        <name>ATP</name>
        <dbReference type="ChEBI" id="CHEBI:30616"/>
    </ligand>
</feature>
<dbReference type="EC" id="7.4.2.10" evidence="1"/>
<dbReference type="EMBL" id="AE017220">
    <property type="protein sequence ID" value="AAX64749.1"/>
    <property type="status" value="ALT_INIT"/>
    <property type="molecule type" value="Genomic_DNA"/>
</dbReference>
<dbReference type="RefSeq" id="WP_001120603.1">
    <property type="nucleotide sequence ID" value="NC_006905.1"/>
</dbReference>
<dbReference type="SMR" id="Q57RB2"/>
<dbReference type="KEGG" id="sec:SCH_0843"/>
<dbReference type="HOGENOM" id="CLU_000604_86_2_6"/>
<dbReference type="Proteomes" id="UP000000538">
    <property type="component" value="Chromosome"/>
</dbReference>
<dbReference type="GO" id="GO:0005886">
    <property type="term" value="C:plasma membrane"/>
    <property type="evidence" value="ECO:0007669"/>
    <property type="project" value="UniProtKB-SubCell"/>
</dbReference>
<dbReference type="GO" id="GO:0005524">
    <property type="term" value="F:ATP binding"/>
    <property type="evidence" value="ECO:0007669"/>
    <property type="project" value="UniProtKB-KW"/>
</dbReference>
<dbReference type="GO" id="GO:0016887">
    <property type="term" value="F:ATP hydrolysis activity"/>
    <property type="evidence" value="ECO:0007669"/>
    <property type="project" value="InterPro"/>
</dbReference>
<dbReference type="GO" id="GO:0015833">
    <property type="term" value="P:peptide transport"/>
    <property type="evidence" value="ECO:0007669"/>
    <property type="project" value="InterPro"/>
</dbReference>
<dbReference type="GO" id="GO:0055085">
    <property type="term" value="P:transmembrane transport"/>
    <property type="evidence" value="ECO:0007669"/>
    <property type="project" value="UniProtKB-ARBA"/>
</dbReference>
<dbReference type="CDD" id="cd03257">
    <property type="entry name" value="ABC_NikE_OppD_transporters"/>
    <property type="match status" value="2"/>
</dbReference>
<dbReference type="FunFam" id="3.40.50.300:FF:000016">
    <property type="entry name" value="Oligopeptide ABC transporter ATP-binding component"/>
    <property type="match status" value="2"/>
</dbReference>
<dbReference type="Gene3D" id="3.40.50.300">
    <property type="entry name" value="P-loop containing nucleotide triphosphate hydrolases"/>
    <property type="match status" value="2"/>
</dbReference>
<dbReference type="InterPro" id="IPR003593">
    <property type="entry name" value="AAA+_ATPase"/>
</dbReference>
<dbReference type="InterPro" id="IPR050319">
    <property type="entry name" value="ABC_transp_ATP-bind"/>
</dbReference>
<dbReference type="InterPro" id="IPR003439">
    <property type="entry name" value="ABC_transporter-like_ATP-bd"/>
</dbReference>
<dbReference type="InterPro" id="IPR017871">
    <property type="entry name" value="ABC_transporter-like_CS"/>
</dbReference>
<dbReference type="InterPro" id="IPR013563">
    <property type="entry name" value="Oligopep_ABC_C"/>
</dbReference>
<dbReference type="InterPro" id="IPR027417">
    <property type="entry name" value="P-loop_NTPase"/>
</dbReference>
<dbReference type="NCBIfam" id="NF007613">
    <property type="entry name" value="PRK10261.1"/>
    <property type="match status" value="1"/>
</dbReference>
<dbReference type="NCBIfam" id="NF007739">
    <property type="entry name" value="PRK10419.1"/>
    <property type="match status" value="2"/>
</dbReference>
<dbReference type="NCBIfam" id="NF008453">
    <property type="entry name" value="PRK11308.1"/>
    <property type="match status" value="2"/>
</dbReference>
<dbReference type="PANTHER" id="PTHR43776:SF15">
    <property type="entry name" value="GLUTATHIONE IMPORT ATP-BINDING PROTEIN GSIA"/>
    <property type="match status" value="1"/>
</dbReference>
<dbReference type="PANTHER" id="PTHR43776">
    <property type="entry name" value="TRANSPORT ATP-BINDING PROTEIN"/>
    <property type="match status" value="1"/>
</dbReference>
<dbReference type="Pfam" id="PF00005">
    <property type="entry name" value="ABC_tran"/>
    <property type="match status" value="2"/>
</dbReference>
<dbReference type="Pfam" id="PF08352">
    <property type="entry name" value="oligo_HPY"/>
    <property type="match status" value="2"/>
</dbReference>
<dbReference type="SMART" id="SM00382">
    <property type="entry name" value="AAA"/>
    <property type="match status" value="2"/>
</dbReference>
<dbReference type="SUPFAM" id="SSF52540">
    <property type="entry name" value="P-loop containing nucleoside triphosphate hydrolases"/>
    <property type="match status" value="2"/>
</dbReference>
<dbReference type="PROSITE" id="PS00211">
    <property type="entry name" value="ABC_TRANSPORTER_1"/>
    <property type="match status" value="2"/>
</dbReference>
<dbReference type="PROSITE" id="PS50893">
    <property type="entry name" value="ABC_TRANSPORTER_2"/>
    <property type="match status" value="2"/>
</dbReference>
<keyword id="KW-0067">ATP-binding</keyword>
<keyword id="KW-0997">Cell inner membrane</keyword>
<keyword id="KW-1003">Cell membrane</keyword>
<keyword id="KW-0378">Hydrolase</keyword>
<keyword id="KW-0472">Membrane</keyword>
<keyword id="KW-0547">Nucleotide-binding</keyword>
<keyword id="KW-0677">Repeat</keyword>
<keyword id="KW-1278">Translocase</keyword>
<keyword id="KW-0813">Transport</keyword>
<name>GSIA_SALCH</name>
<accession>Q57RB2</accession>
<proteinExistence type="inferred from homology"/>